<protein>
    <recommendedName>
        <fullName evidence="1">Small ribosomal subunit protein bS16</fullName>
    </recommendedName>
    <alternativeName>
        <fullName evidence="2">30S ribosomal protein S16</fullName>
    </alternativeName>
</protein>
<sequence length="86" mass="9940">MVVIRLSRAGAKKRPFYHMVVTDSRKRRDGNYIERIGYFNPVARGQEVKLHIDMDKMTHWQKVGAQLSDRVSALLKEHSKKSETAA</sequence>
<keyword id="KW-0687">Ribonucleoprotein</keyword>
<keyword id="KW-0689">Ribosomal protein</keyword>
<comment type="similarity">
    <text evidence="1">Belongs to the bacterial ribosomal protein bS16 family.</text>
</comment>
<proteinExistence type="inferred from homology"/>
<gene>
    <name evidence="1" type="primary">rpsP</name>
    <name type="ordered locus">lpl0442</name>
</gene>
<accession>Q5WZE0</accession>
<organism>
    <name type="scientific">Legionella pneumophila (strain Lens)</name>
    <dbReference type="NCBI Taxonomy" id="297245"/>
    <lineage>
        <taxon>Bacteria</taxon>
        <taxon>Pseudomonadati</taxon>
        <taxon>Pseudomonadota</taxon>
        <taxon>Gammaproteobacteria</taxon>
        <taxon>Legionellales</taxon>
        <taxon>Legionellaceae</taxon>
        <taxon>Legionella</taxon>
    </lineage>
</organism>
<name>RS16_LEGPL</name>
<evidence type="ECO:0000255" key="1">
    <source>
        <dbReference type="HAMAP-Rule" id="MF_00385"/>
    </source>
</evidence>
<evidence type="ECO:0000305" key="2"/>
<feature type="chain" id="PRO_0000243819" description="Small ribosomal subunit protein bS16">
    <location>
        <begin position="1"/>
        <end position="86"/>
    </location>
</feature>
<reference key="1">
    <citation type="journal article" date="2004" name="Nat. Genet.">
        <title>Evidence in the Legionella pneumophila genome for exploitation of host cell functions and high genome plasticity.</title>
        <authorList>
            <person name="Cazalet C."/>
            <person name="Rusniok C."/>
            <person name="Brueggemann H."/>
            <person name="Zidane N."/>
            <person name="Magnier A."/>
            <person name="Ma L."/>
            <person name="Tichit M."/>
            <person name="Jarraud S."/>
            <person name="Bouchier C."/>
            <person name="Vandenesch F."/>
            <person name="Kunst F."/>
            <person name="Etienne J."/>
            <person name="Glaser P."/>
            <person name="Buchrieser C."/>
        </authorList>
    </citation>
    <scope>NUCLEOTIDE SEQUENCE [LARGE SCALE GENOMIC DNA]</scope>
    <source>
        <strain>Lens</strain>
    </source>
</reference>
<dbReference type="EMBL" id="CR628337">
    <property type="protein sequence ID" value="CAH14672.1"/>
    <property type="molecule type" value="Genomic_DNA"/>
</dbReference>
<dbReference type="RefSeq" id="WP_010946148.1">
    <property type="nucleotide sequence ID" value="NC_006369.1"/>
</dbReference>
<dbReference type="SMR" id="Q5WZE0"/>
<dbReference type="GeneID" id="57034402"/>
<dbReference type="KEGG" id="lpf:lpl0442"/>
<dbReference type="LegioList" id="lpl0442"/>
<dbReference type="HOGENOM" id="CLU_100590_5_1_6"/>
<dbReference type="Proteomes" id="UP000002517">
    <property type="component" value="Chromosome"/>
</dbReference>
<dbReference type="GO" id="GO:0005737">
    <property type="term" value="C:cytoplasm"/>
    <property type="evidence" value="ECO:0007669"/>
    <property type="project" value="UniProtKB-ARBA"/>
</dbReference>
<dbReference type="GO" id="GO:0015935">
    <property type="term" value="C:small ribosomal subunit"/>
    <property type="evidence" value="ECO:0007669"/>
    <property type="project" value="TreeGrafter"/>
</dbReference>
<dbReference type="GO" id="GO:0003735">
    <property type="term" value="F:structural constituent of ribosome"/>
    <property type="evidence" value="ECO:0007669"/>
    <property type="project" value="InterPro"/>
</dbReference>
<dbReference type="GO" id="GO:0006412">
    <property type="term" value="P:translation"/>
    <property type="evidence" value="ECO:0007669"/>
    <property type="project" value="UniProtKB-UniRule"/>
</dbReference>
<dbReference type="Gene3D" id="3.30.1320.10">
    <property type="match status" value="1"/>
</dbReference>
<dbReference type="HAMAP" id="MF_00385">
    <property type="entry name" value="Ribosomal_bS16"/>
    <property type="match status" value="1"/>
</dbReference>
<dbReference type="InterPro" id="IPR000307">
    <property type="entry name" value="Ribosomal_bS16"/>
</dbReference>
<dbReference type="InterPro" id="IPR020592">
    <property type="entry name" value="Ribosomal_bS16_CS"/>
</dbReference>
<dbReference type="InterPro" id="IPR023803">
    <property type="entry name" value="Ribosomal_bS16_dom_sf"/>
</dbReference>
<dbReference type="NCBIfam" id="TIGR00002">
    <property type="entry name" value="S16"/>
    <property type="match status" value="1"/>
</dbReference>
<dbReference type="PANTHER" id="PTHR12919">
    <property type="entry name" value="30S RIBOSOMAL PROTEIN S16"/>
    <property type="match status" value="1"/>
</dbReference>
<dbReference type="PANTHER" id="PTHR12919:SF20">
    <property type="entry name" value="SMALL RIBOSOMAL SUBUNIT PROTEIN BS16M"/>
    <property type="match status" value="1"/>
</dbReference>
<dbReference type="Pfam" id="PF00886">
    <property type="entry name" value="Ribosomal_S16"/>
    <property type="match status" value="1"/>
</dbReference>
<dbReference type="SUPFAM" id="SSF54565">
    <property type="entry name" value="Ribosomal protein S16"/>
    <property type="match status" value="1"/>
</dbReference>
<dbReference type="PROSITE" id="PS00732">
    <property type="entry name" value="RIBOSOMAL_S16"/>
    <property type="match status" value="1"/>
</dbReference>